<dbReference type="EMBL" id="BC109766">
    <property type="protein sequence ID" value="AAI09767.2"/>
    <property type="molecule type" value="mRNA"/>
</dbReference>
<dbReference type="RefSeq" id="NP_001069337.1">
    <property type="nucleotide sequence ID" value="NM_001075869.2"/>
</dbReference>
<dbReference type="FunCoup" id="Q32L50">
    <property type="interactions" value="16"/>
</dbReference>
<dbReference type="STRING" id="9913.ENSBTAP00000022924"/>
<dbReference type="GlyCosmos" id="Q32L50">
    <property type="glycosylation" value="1 site, No reported glycans"/>
</dbReference>
<dbReference type="GlyGen" id="Q32L50">
    <property type="glycosylation" value="1 site"/>
</dbReference>
<dbReference type="PaxDb" id="9913-ENSBTAP00000022924"/>
<dbReference type="GeneID" id="525332"/>
<dbReference type="KEGG" id="bta:525332"/>
<dbReference type="CTD" id="157869"/>
<dbReference type="VEuPathDB" id="HostDB:ENSBTAG00000017249"/>
<dbReference type="eggNOG" id="ENOG502QV8I">
    <property type="taxonomic scope" value="Eukaryota"/>
</dbReference>
<dbReference type="HOGENOM" id="CLU_058116_1_1_1"/>
<dbReference type="InParanoid" id="Q32L50"/>
<dbReference type="OMA" id="QAASPQW"/>
<dbReference type="OrthoDB" id="98591at2759"/>
<dbReference type="TreeFam" id="TF315634"/>
<dbReference type="Reactome" id="R-BTA-5173214">
    <property type="pathway name" value="O-glycosylation of TSR domain-containing proteins"/>
</dbReference>
<dbReference type="Proteomes" id="UP000009136">
    <property type="component" value="Chromosome 14"/>
</dbReference>
<dbReference type="Bgee" id="ENSBTAG00000017249">
    <property type="expression patterns" value="Expressed in trachea and 92 other cell types or tissues"/>
</dbReference>
<dbReference type="GO" id="GO:0005576">
    <property type="term" value="C:extracellular region"/>
    <property type="evidence" value="ECO:0007669"/>
    <property type="project" value="UniProtKB-KW"/>
</dbReference>
<dbReference type="FunFam" id="2.20.100.10:FF:000019">
    <property type="entry name" value="Thrombospondin type 1 domain containing 7A"/>
    <property type="match status" value="1"/>
</dbReference>
<dbReference type="Gene3D" id="2.20.100.10">
    <property type="entry name" value="Thrombospondin type-1 (TSP1) repeat"/>
    <property type="match status" value="1"/>
</dbReference>
<dbReference type="InterPro" id="IPR039942">
    <property type="entry name" value="SBSPO"/>
</dbReference>
<dbReference type="InterPro" id="IPR056801">
    <property type="entry name" value="SBSPON_C"/>
</dbReference>
<dbReference type="InterPro" id="IPR036024">
    <property type="entry name" value="Somatomedin_B-like_dom_sf"/>
</dbReference>
<dbReference type="InterPro" id="IPR001212">
    <property type="entry name" value="Somatomedin_B_dom"/>
</dbReference>
<dbReference type="InterPro" id="IPR000884">
    <property type="entry name" value="TSP1_rpt"/>
</dbReference>
<dbReference type="InterPro" id="IPR036383">
    <property type="entry name" value="TSP1_rpt_sf"/>
</dbReference>
<dbReference type="InterPro" id="IPR044004">
    <property type="entry name" value="TSP1_spondin_dom"/>
</dbReference>
<dbReference type="PANTHER" id="PTHR20920">
    <property type="entry name" value="RPE-SPONDIN"/>
    <property type="match status" value="1"/>
</dbReference>
<dbReference type="PANTHER" id="PTHR20920:SF2">
    <property type="entry name" value="SOMATOMEDIN-B AND THROMBOSPONDIN TYPE-1 DOMAIN-CONTAINING PROTEIN"/>
    <property type="match status" value="1"/>
</dbReference>
<dbReference type="Pfam" id="PF25031">
    <property type="entry name" value="SBSPON_C"/>
    <property type="match status" value="1"/>
</dbReference>
<dbReference type="Pfam" id="PF19028">
    <property type="entry name" value="TSP1_spondin"/>
    <property type="match status" value="1"/>
</dbReference>
<dbReference type="SUPFAM" id="SSF90188">
    <property type="entry name" value="Somatomedin B domain"/>
    <property type="match status" value="1"/>
</dbReference>
<dbReference type="SUPFAM" id="SSF82895">
    <property type="entry name" value="TSP-1 type 1 repeat"/>
    <property type="match status" value="1"/>
</dbReference>
<dbReference type="PROSITE" id="PS00524">
    <property type="entry name" value="SMB_1"/>
    <property type="match status" value="1"/>
</dbReference>
<dbReference type="PROSITE" id="PS50958">
    <property type="entry name" value="SMB_2"/>
    <property type="match status" value="1"/>
</dbReference>
<dbReference type="PROSITE" id="PS50092">
    <property type="entry name" value="TSP1"/>
    <property type="match status" value="1"/>
</dbReference>
<sequence length="264" mass="29310">MRTLWMALCVLARLWPGALAGCADAGRCCPGRDPACFASGWRQDRVYGTCFCDQACRLTGDCCFDYARACPARPCIVGEWSPWSGCASQCRPTARVRRRAVQQEPQNGGEPCPALEERAGCLEYATPQGEDCGHAFVPAFITTSAFNKERTRQAASPHWTTSTEDAGYCMEFKTESLTHHCALENRPLTRWMQYLREGYTVCVDCQPPAMNSVSLRCSGDGLDSDGNQTLHWQAIGNPRCQGTWKKVRRVEQCSCPAVHSFIFI</sequence>
<accession>Q32L50</accession>
<organism>
    <name type="scientific">Bos taurus</name>
    <name type="common">Bovine</name>
    <dbReference type="NCBI Taxonomy" id="9913"/>
    <lineage>
        <taxon>Eukaryota</taxon>
        <taxon>Metazoa</taxon>
        <taxon>Chordata</taxon>
        <taxon>Craniata</taxon>
        <taxon>Vertebrata</taxon>
        <taxon>Euteleostomi</taxon>
        <taxon>Mammalia</taxon>
        <taxon>Eutheria</taxon>
        <taxon>Laurasiatheria</taxon>
        <taxon>Artiodactyla</taxon>
        <taxon>Ruminantia</taxon>
        <taxon>Pecora</taxon>
        <taxon>Bovidae</taxon>
        <taxon>Bovinae</taxon>
        <taxon>Bos</taxon>
    </lineage>
</organism>
<reference key="1">
    <citation type="submission" date="2005-11" db="EMBL/GenBank/DDBJ databases">
        <authorList>
            <consortium name="NIH - Mammalian Gene Collection (MGC) project"/>
        </authorList>
    </citation>
    <scope>NUCLEOTIDE SEQUENCE [LARGE SCALE MRNA]</scope>
    <source>
        <strain>Crossbred X Angus</strain>
        <tissue>Liver</tissue>
    </source>
</reference>
<keyword id="KW-1015">Disulfide bond</keyword>
<keyword id="KW-0272">Extracellular matrix</keyword>
<keyword id="KW-0325">Glycoprotein</keyword>
<keyword id="KW-1185">Reference proteome</keyword>
<keyword id="KW-0964">Secreted</keyword>
<keyword id="KW-0732">Signal</keyword>
<proteinExistence type="evidence at transcript level"/>
<feature type="signal peptide" evidence="2">
    <location>
        <begin position="1"/>
        <end position="20"/>
    </location>
</feature>
<feature type="chain" id="PRO_0000332157" description="Somatomedin-B and thrombospondin type-1 domain-containing protein">
    <location>
        <begin position="21"/>
        <end position="264"/>
    </location>
</feature>
<feature type="domain" description="SMB" evidence="4">
    <location>
        <begin position="24"/>
        <end position="75"/>
    </location>
</feature>
<feature type="domain" description="TSP type-1" evidence="3">
    <location>
        <begin position="74"/>
        <end position="127"/>
    </location>
</feature>
<feature type="glycosylation site" description="N-linked (GlcNAc...) asparagine" evidence="2">
    <location>
        <position position="227"/>
    </location>
</feature>
<feature type="disulfide bond" description="Alternate" evidence="4">
    <location>
        <begin position="28"/>
        <end position="52"/>
    </location>
</feature>
<feature type="disulfide bond" description="Alternate" evidence="4">
    <location>
        <begin position="28"/>
        <end position="36"/>
    </location>
</feature>
<feature type="disulfide bond" description="Alternate" evidence="4">
    <location>
        <begin position="36"/>
        <end position="70"/>
    </location>
</feature>
<feature type="disulfide bond" description="Alternate" evidence="4">
    <location>
        <begin position="50"/>
        <end position="63"/>
    </location>
</feature>
<feature type="disulfide bond" description="Alternate" evidence="4">
    <location>
        <begin position="50"/>
        <end position="52"/>
    </location>
</feature>
<feature type="disulfide bond" evidence="1">
    <location>
        <begin position="56"/>
        <end position="62"/>
    </location>
</feature>
<feature type="disulfide bond" description="Alternate" evidence="4">
    <location>
        <begin position="63"/>
        <end position="70"/>
    </location>
</feature>
<comment type="subcellular location">
    <subcellularLocation>
        <location evidence="1">Secreted</location>
        <location evidence="1">Extracellular space</location>
        <location evidence="1">Extracellular matrix</location>
    </subcellularLocation>
</comment>
<comment type="similarity">
    <text evidence="5">Belongs to the thrombospondin family.</text>
</comment>
<evidence type="ECO:0000250" key="1"/>
<evidence type="ECO:0000255" key="2"/>
<evidence type="ECO:0000255" key="3">
    <source>
        <dbReference type="PROSITE-ProRule" id="PRU00210"/>
    </source>
</evidence>
<evidence type="ECO:0000255" key="4">
    <source>
        <dbReference type="PROSITE-ProRule" id="PRU00350"/>
    </source>
</evidence>
<evidence type="ECO:0000305" key="5"/>
<protein>
    <recommendedName>
        <fullName>Somatomedin-B and thrombospondin type-1 domain-containing protein</fullName>
    </recommendedName>
    <alternativeName>
        <fullName>RPE-spondin</fullName>
    </alternativeName>
</protein>
<name>SBSPO_BOVIN</name>
<gene>
    <name type="primary">SBSPON</name>
    <name type="synonym">RPESP</name>
</gene>